<accession>B5FAX6</accession>
<organism>
    <name type="scientific">Aliivibrio fischeri (strain MJ11)</name>
    <name type="common">Vibrio fischeri</name>
    <dbReference type="NCBI Taxonomy" id="388396"/>
    <lineage>
        <taxon>Bacteria</taxon>
        <taxon>Pseudomonadati</taxon>
        <taxon>Pseudomonadota</taxon>
        <taxon>Gammaproteobacteria</taxon>
        <taxon>Vibrionales</taxon>
        <taxon>Vibrionaceae</taxon>
        <taxon>Aliivibrio</taxon>
    </lineage>
</organism>
<protein>
    <recommendedName>
        <fullName evidence="1">GTPase Der</fullName>
    </recommendedName>
    <alternativeName>
        <fullName evidence="1">GTP-binding protein EngA</fullName>
    </alternativeName>
</protein>
<proteinExistence type="inferred from homology"/>
<dbReference type="EMBL" id="CP001139">
    <property type="protein sequence ID" value="ACH67046.1"/>
    <property type="molecule type" value="Genomic_DNA"/>
</dbReference>
<dbReference type="RefSeq" id="WP_011261369.1">
    <property type="nucleotide sequence ID" value="NC_011184.1"/>
</dbReference>
<dbReference type="SMR" id="B5FAX6"/>
<dbReference type="GeneID" id="54163286"/>
<dbReference type="KEGG" id="vfm:VFMJ11_0647"/>
<dbReference type="HOGENOM" id="CLU_016077_6_2_6"/>
<dbReference type="Proteomes" id="UP000001857">
    <property type="component" value="Chromosome I"/>
</dbReference>
<dbReference type="GO" id="GO:0005525">
    <property type="term" value="F:GTP binding"/>
    <property type="evidence" value="ECO:0007669"/>
    <property type="project" value="UniProtKB-UniRule"/>
</dbReference>
<dbReference type="GO" id="GO:0043022">
    <property type="term" value="F:ribosome binding"/>
    <property type="evidence" value="ECO:0007669"/>
    <property type="project" value="TreeGrafter"/>
</dbReference>
<dbReference type="GO" id="GO:0042254">
    <property type="term" value="P:ribosome biogenesis"/>
    <property type="evidence" value="ECO:0007669"/>
    <property type="project" value="UniProtKB-KW"/>
</dbReference>
<dbReference type="CDD" id="cd01894">
    <property type="entry name" value="EngA1"/>
    <property type="match status" value="1"/>
</dbReference>
<dbReference type="CDD" id="cd01895">
    <property type="entry name" value="EngA2"/>
    <property type="match status" value="1"/>
</dbReference>
<dbReference type="FunFam" id="3.30.300.20:FF:000004">
    <property type="entry name" value="GTPase Der"/>
    <property type="match status" value="1"/>
</dbReference>
<dbReference type="FunFam" id="3.40.50.300:FF:000040">
    <property type="entry name" value="GTPase Der"/>
    <property type="match status" value="1"/>
</dbReference>
<dbReference type="FunFam" id="3.40.50.300:FF:000057">
    <property type="entry name" value="GTPase Der"/>
    <property type="match status" value="1"/>
</dbReference>
<dbReference type="Gene3D" id="3.30.300.20">
    <property type="match status" value="1"/>
</dbReference>
<dbReference type="Gene3D" id="3.40.50.300">
    <property type="entry name" value="P-loop containing nucleotide triphosphate hydrolases"/>
    <property type="match status" value="2"/>
</dbReference>
<dbReference type="HAMAP" id="MF_00195">
    <property type="entry name" value="GTPase_Der"/>
    <property type="match status" value="1"/>
</dbReference>
<dbReference type="InterPro" id="IPR031166">
    <property type="entry name" value="G_ENGA"/>
</dbReference>
<dbReference type="InterPro" id="IPR006073">
    <property type="entry name" value="GTP-bd"/>
</dbReference>
<dbReference type="InterPro" id="IPR016484">
    <property type="entry name" value="GTPase_Der"/>
</dbReference>
<dbReference type="InterPro" id="IPR032859">
    <property type="entry name" value="KH_dom-like"/>
</dbReference>
<dbReference type="InterPro" id="IPR015946">
    <property type="entry name" value="KH_dom-like_a/b"/>
</dbReference>
<dbReference type="InterPro" id="IPR027417">
    <property type="entry name" value="P-loop_NTPase"/>
</dbReference>
<dbReference type="InterPro" id="IPR005225">
    <property type="entry name" value="Small_GTP-bd"/>
</dbReference>
<dbReference type="NCBIfam" id="TIGR03594">
    <property type="entry name" value="GTPase_EngA"/>
    <property type="match status" value="1"/>
</dbReference>
<dbReference type="NCBIfam" id="TIGR00231">
    <property type="entry name" value="small_GTP"/>
    <property type="match status" value="2"/>
</dbReference>
<dbReference type="PANTHER" id="PTHR43834">
    <property type="entry name" value="GTPASE DER"/>
    <property type="match status" value="1"/>
</dbReference>
<dbReference type="PANTHER" id="PTHR43834:SF6">
    <property type="entry name" value="GTPASE DER"/>
    <property type="match status" value="1"/>
</dbReference>
<dbReference type="Pfam" id="PF14714">
    <property type="entry name" value="KH_dom-like"/>
    <property type="match status" value="1"/>
</dbReference>
<dbReference type="Pfam" id="PF01926">
    <property type="entry name" value="MMR_HSR1"/>
    <property type="match status" value="2"/>
</dbReference>
<dbReference type="PIRSF" id="PIRSF006485">
    <property type="entry name" value="GTP-binding_EngA"/>
    <property type="match status" value="1"/>
</dbReference>
<dbReference type="PRINTS" id="PR00326">
    <property type="entry name" value="GTP1OBG"/>
</dbReference>
<dbReference type="SUPFAM" id="SSF52540">
    <property type="entry name" value="P-loop containing nucleoside triphosphate hydrolases"/>
    <property type="match status" value="2"/>
</dbReference>
<dbReference type="PROSITE" id="PS51712">
    <property type="entry name" value="G_ENGA"/>
    <property type="match status" value="2"/>
</dbReference>
<name>DER_ALIFM</name>
<gene>
    <name evidence="1" type="primary">der</name>
    <name type="synonym">engA</name>
    <name type="ordered locus">VFMJ11_0647</name>
</gene>
<comment type="function">
    <text evidence="1">GTPase that plays an essential role in the late steps of ribosome biogenesis.</text>
</comment>
<comment type="subunit">
    <text evidence="1">Associates with the 50S ribosomal subunit.</text>
</comment>
<comment type="similarity">
    <text evidence="1">Belongs to the TRAFAC class TrmE-Era-EngA-EngB-Septin-like GTPase superfamily. EngA (Der) GTPase family.</text>
</comment>
<reference key="1">
    <citation type="submission" date="2008-08" db="EMBL/GenBank/DDBJ databases">
        <title>Complete sequence of Vibrio fischeri strain MJ11.</title>
        <authorList>
            <person name="Mandel M.J."/>
            <person name="Stabb E.V."/>
            <person name="Ruby E.G."/>
            <person name="Ferriera S."/>
            <person name="Johnson J."/>
            <person name="Kravitz S."/>
            <person name="Beeson K."/>
            <person name="Sutton G."/>
            <person name="Rogers Y.-H."/>
            <person name="Friedman R."/>
            <person name="Frazier M."/>
            <person name="Venter J.C."/>
        </authorList>
    </citation>
    <scope>NUCLEOTIDE SEQUENCE [LARGE SCALE GENOMIC DNA]</scope>
    <source>
        <strain>MJ11</strain>
    </source>
</reference>
<keyword id="KW-0342">GTP-binding</keyword>
<keyword id="KW-0547">Nucleotide-binding</keyword>
<keyword id="KW-0677">Repeat</keyword>
<keyword id="KW-0690">Ribosome biogenesis</keyword>
<evidence type="ECO:0000255" key="1">
    <source>
        <dbReference type="HAMAP-Rule" id="MF_00195"/>
    </source>
</evidence>
<evidence type="ECO:0000256" key="2">
    <source>
        <dbReference type="SAM" id="MobiDB-lite"/>
    </source>
</evidence>
<sequence>MIPVVALVGRPNVGKSTLFNRLTRTRDALVADFPGLTRDRKYGRAKLEEQEFILIDTGGIDGTEQGVETKMAEQSLAAIEEADVVLFMVDGRAGLTSADEAIAKHLRSREKPTFLVVNKIDGIDADAASAEFWQLGMNKVYQIAASHGRGVTSLLELALAPFMEELVEESLKDENGEITDLTEFEDFEDEEKDLTEEDAEKDFARLQDQPIKLAIIGRPNVGKSTLTNRILGEERVVVYDMPGTTRDSIYIPMEREGQEYVLIDTAGVRRRGRINETVEKFSVIKTLKAVEDANVVLLVIDARENISDQDLSLLGFALNAGRSLVIAVNKWDGLDNDVKEKVKSELDRRLGFVDFARIHFISALHGTGVGHLYESVQEAYVSATKRVGTSVLTRIMKMAQDDHQPPLVRGRRVKLKYAHAGGYNPPLIVIHGNQVKELPSSYKRFLMNYYRKSLEIMGTPIRIQFQNSENPFEDRGGKLTMSQERQRKRLLGAVKNRNKK</sequence>
<feature type="chain" id="PRO_1000099178" description="GTPase Der">
    <location>
        <begin position="1"/>
        <end position="500"/>
    </location>
</feature>
<feature type="domain" description="EngA-type G 1">
    <location>
        <begin position="3"/>
        <end position="166"/>
    </location>
</feature>
<feature type="domain" description="EngA-type G 2">
    <location>
        <begin position="211"/>
        <end position="384"/>
    </location>
</feature>
<feature type="domain" description="KH-like" evidence="1">
    <location>
        <begin position="385"/>
        <end position="469"/>
    </location>
</feature>
<feature type="region of interest" description="Disordered" evidence="2">
    <location>
        <begin position="468"/>
        <end position="500"/>
    </location>
</feature>
<feature type="compositionally biased region" description="Basic residues" evidence="2">
    <location>
        <begin position="486"/>
        <end position="500"/>
    </location>
</feature>
<feature type="binding site" evidence="1">
    <location>
        <begin position="9"/>
        <end position="16"/>
    </location>
    <ligand>
        <name>GTP</name>
        <dbReference type="ChEBI" id="CHEBI:37565"/>
        <label>1</label>
    </ligand>
</feature>
<feature type="binding site" evidence="1">
    <location>
        <begin position="56"/>
        <end position="60"/>
    </location>
    <ligand>
        <name>GTP</name>
        <dbReference type="ChEBI" id="CHEBI:37565"/>
        <label>1</label>
    </ligand>
</feature>
<feature type="binding site" evidence="1">
    <location>
        <begin position="118"/>
        <end position="121"/>
    </location>
    <ligand>
        <name>GTP</name>
        <dbReference type="ChEBI" id="CHEBI:37565"/>
        <label>1</label>
    </ligand>
</feature>
<feature type="binding site" evidence="1">
    <location>
        <begin position="217"/>
        <end position="224"/>
    </location>
    <ligand>
        <name>GTP</name>
        <dbReference type="ChEBI" id="CHEBI:37565"/>
        <label>2</label>
    </ligand>
</feature>
<feature type="binding site" evidence="1">
    <location>
        <begin position="264"/>
        <end position="268"/>
    </location>
    <ligand>
        <name>GTP</name>
        <dbReference type="ChEBI" id="CHEBI:37565"/>
        <label>2</label>
    </ligand>
</feature>
<feature type="binding site" evidence="1">
    <location>
        <begin position="329"/>
        <end position="332"/>
    </location>
    <ligand>
        <name>GTP</name>
        <dbReference type="ChEBI" id="CHEBI:37565"/>
        <label>2</label>
    </ligand>
</feature>